<organism>
    <name type="scientific">Clavispora lusitaniae (strain ATCC 42720)</name>
    <name type="common">Yeast</name>
    <name type="synonym">Candida lusitaniae</name>
    <dbReference type="NCBI Taxonomy" id="306902"/>
    <lineage>
        <taxon>Eukaryota</taxon>
        <taxon>Fungi</taxon>
        <taxon>Dikarya</taxon>
        <taxon>Ascomycota</taxon>
        <taxon>Saccharomycotina</taxon>
        <taxon>Pichiomycetes</taxon>
        <taxon>Metschnikowiaceae</taxon>
        <taxon>Clavispora</taxon>
    </lineage>
</organism>
<proteinExistence type="inferred from homology"/>
<reference key="1">
    <citation type="journal article" date="2009" name="Nature">
        <title>Evolution of pathogenicity and sexual reproduction in eight Candida genomes.</title>
        <authorList>
            <person name="Butler G."/>
            <person name="Rasmussen M.D."/>
            <person name="Lin M.F."/>
            <person name="Santos M.A.S."/>
            <person name="Sakthikumar S."/>
            <person name="Munro C.A."/>
            <person name="Rheinbay E."/>
            <person name="Grabherr M."/>
            <person name="Forche A."/>
            <person name="Reedy J.L."/>
            <person name="Agrafioti I."/>
            <person name="Arnaud M.B."/>
            <person name="Bates S."/>
            <person name="Brown A.J.P."/>
            <person name="Brunke S."/>
            <person name="Costanzo M.C."/>
            <person name="Fitzpatrick D.A."/>
            <person name="de Groot P.W.J."/>
            <person name="Harris D."/>
            <person name="Hoyer L.L."/>
            <person name="Hube B."/>
            <person name="Klis F.M."/>
            <person name="Kodira C."/>
            <person name="Lennard N."/>
            <person name="Logue M.E."/>
            <person name="Martin R."/>
            <person name="Neiman A.M."/>
            <person name="Nikolaou E."/>
            <person name="Quail M.A."/>
            <person name="Quinn J."/>
            <person name="Santos M.C."/>
            <person name="Schmitzberger F.F."/>
            <person name="Sherlock G."/>
            <person name="Shah P."/>
            <person name="Silverstein K.A.T."/>
            <person name="Skrzypek M.S."/>
            <person name="Soll D."/>
            <person name="Staggs R."/>
            <person name="Stansfield I."/>
            <person name="Stumpf M.P.H."/>
            <person name="Sudbery P.E."/>
            <person name="Srikantha T."/>
            <person name="Zeng Q."/>
            <person name="Berman J."/>
            <person name="Berriman M."/>
            <person name="Heitman J."/>
            <person name="Gow N.A.R."/>
            <person name="Lorenz M.C."/>
            <person name="Birren B.W."/>
            <person name="Kellis M."/>
            <person name="Cuomo C.A."/>
        </authorList>
    </citation>
    <scope>NUCLEOTIDE SEQUENCE [LARGE SCALE GENOMIC DNA]</scope>
    <source>
        <strain>ATCC 42720</strain>
    </source>
</reference>
<keyword id="KW-0597">Phosphoprotein</keyword>
<keyword id="KW-1185">Reference proteome</keyword>
<evidence type="ECO:0000250" key="1"/>
<evidence type="ECO:0000255" key="2">
    <source>
        <dbReference type="PROSITE-ProRule" id="PRU00169"/>
    </source>
</evidence>
<sequence length="191" mass="21893">MIVTPVSEVEGEFFKTWSPSMKSTSSNSCNSKNHIDTRDINSFYPSPVEDSEAFIPNNQPYSFLLVDDNEINLRIFRRMLLKLFPNASVRTVQESASVEISHRTLSHYHLIFLDIEMPIVTGTEIASKVRSSRELDQVGLIAVTTKYLCADLELYEKLGFDFTFRKPVEYPTNYILQKIEQVLQTRCGGRV</sequence>
<dbReference type="EMBL" id="CH408078">
    <property type="protein sequence ID" value="EEQ38335.1"/>
    <property type="molecule type" value="Genomic_DNA"/>
</dbReference>
<dbReference type="RefSeq" id="XP_002617017.1">
    <property type="nucleotide sequence ID" value="XM_002616971.1"/>
</dbReference>
<dbReference type="SMR" id="C4Y489"/>
<dbReference type="STRING" id="306902.C4Y489"/>
<dbReference type="GeneID" id="8498072"/>
<dbReference type="KEGG" id="clu:CLUG_02461"/>
<dbReference type="VEuPathDB" id="FungiDB:CLUG_02461"/>
<dbReference type="HOGENOM" id="CLU_065405_0_0_1"/>
<dbReference type="InParanoid" id="C4Y489"/>
<dbReference type="OMA" id="CKWATSA"/>
<dbReference type="OrthoDB" id="123414at4891"/>
<dbReference type="Proteomes" id="UP000007703">
    <property type="component" value="Unassembled WGS sequence"/>
</dbReference>
<dbReference type="GO" id="GO:0036180">
    <property type="term" value="P:filamentous growth of a population of unicellular organisms in response to biotic stimulus"/>
    <property type="evidence" value="ECO:0007669"/>
    <property type="project" value="UniProtKB-ARBA"/>
</dbReference>
<dbReference type="GO" id="GO:0000160">
    <property type="term" value="P:phosphorelay signal transduction system"/>
    <property type="evidence" value="ECO:0007669"/>
    <property type="project" value="InterPro"/>
</dbReference>
<dbReference type="GO" id="GO:1900445">
    <property type="term" value="P:positive regulation of filamentous growth of a population of unicellular organisms in response to biotic stimulus"/>
    <property type="evidence" value="ECO:0007669"/>
    <property type="project" value="UniProtKB-ARBA"/>
</dbReference>
<dbReference type="CDD" id="cd17546">
    <property type="entry name" value="REC_hyHK_CKI1_RcsC-like"/>
    <property type="match status" value="1"/>
</dbReference>
<dbReference type="Gene3D" id="3.40.50.2300">
    <property type="match status" value="1"/>
</dbReference>
<dbReference type="InterPro" id="IPR011006">
    <property type="entry name" value="CheY-like_superfamily"/>
</dbReference>
<dbReference type="InterPro" id="IPR001789">
    <property type="entry name" value="Sig_transdc_resp-reg_receiver"/>
</dbReference>
<dbReference type="InterPro" id="IPR052048">
    <property type="entry name" value="ST_Response_Regulator"/>
</dbReference>
<dbReference type="PANTHER" id="PTHR43228">
    <property type="entry name" value="TWO-COMPONENT RESPONSE REGULATOR"/>
    <property type="match status" value="1"/>
</dbReference>
<dbReference type="PANTHER" id="PTHR43228:SF1">
    <property type="entry name" value="TWO-COMPONENT RESPONSE REGULATOR ARR22"/>
    <property type="match status" value="1"/>
</dbReference>
<dbReference type="Pfam" id="PF00072">
    <property type="entry name" value="Response_reg"/>
    <property type="match status" value="1"/>
</dbReference>
<dbReference type="SMART" id="SM00448">
    <property type="entry name" value="REC"/>
    <property type="match status" value="1"/>
</dbReference>
<dbReference type="SUPFAM" id="SSF52172">
    <property type="entry name" value="CheY-like"/>
    <property type="match status" value="1"/>
</dbReference>
<dbReference type="PROSITE" id="PS50110">
    <property type="entry name" value="RESPONSE_REGULATORY"/>
    <property type="match status" value="1"/>
</dbReference>
<feature type="chain" id="PRO_0000413389" description="Stress response regulator protein 1">
    <location>
        <begin position="1"/>
        <end position="191"/>
    </location>
</feature>
<feature type="domain" description="Response regulatory" evidence="2">
    <location>
        <begin position="62"/>
        <end position="181"/>
    </location>
</feature>
<feature type="modified residue" description="4-aspartylphosphate" evidence="2">
    <location>
        <position position="114"/>
    </location>
</feature>
<name>SRR1_CLAL4</name>
<comment type="function">
    <text evidence="1">Required for stress adaptation, morphogenesis and virulence.</text>
</comment>
<gene>
    <name type="primary">SRR1</name>
    <name type="ORF">CLUG_02461</name>
</gene>
<accession>C4Y489</accession>
<protein>
    <recommendedName>
        <fullName>Stress response regulator protein 1</fullName>
    </recommendedName>
</protein>